<gene>
    <name type="primary">yciY</name>
    <name type="ordered locus">c1714</name>
</gene>
<protein>
    <recommendedName>
        <fullName>Uncharacterized protein YciY</fullName>
    </recommendedName>
</protein>
<accession>Q8FHW7</accession>
<keyword id="KW-1185">Reference proteome</keyword>
<dbReference type="EMBL" id="AE014075">
    <property type="protein sequence ID" value="AAN80181.1"/>
    <property type="status" value="ALT_INIT"/>
    <property type="molecule type" value="Genomic_DNA"/>
</dbReference>
<dbReference type="RefSeq" id="WP_001309467.1">
    <property type="nucleotide sequence ID" value="NZ_CP051263.1"/>
</dbReference>
<dbReference type="STRING" id="199310.c1714"/>
<dbReference type="KEGG" id="ecc:c1714"/>
<dbReference type="eggNOG" id="ENOG50334IP">
    <property type="taxonomic scope" value="Bacteria"/>
</dbReference>
<dbReference type="HOGENOM" id="CLU_2381553_0_0_6"/>
<dbReference type="Proteomes" id="UP000001410">
    <property type="component" value="Chromosome"/>
</dbReference>
<dbReference type="InterPro" id="IPR049586">
    <property type="entry name" value="YciY"/>
</dbReference>
<dbReference type="NCBIfam" id="NF033701">
    <property type="entry name" value="yciY_fam"/>
    <property type="match status" value="1"/>
</dbReference>
<organism>
    <name type="scientific">Escherichia coli O6:H1 (strain CFT073 / ATCC 700928 / UPEC)</name>
    <dbReference type="NCBI Taxonomy" id="199310"/>
    <lineage>
        <taxon>Bacteria</taxon>
        <taxon>Pseudomonadati</taxon>
        <taxon>Pseudomonadota</taxon>
        <taxon>Gammaproteobacteria</taxon>
        <taxon>Enterobacterales</taxon>
        <taxon>Enterobacteriaceae</taxon>
        <taxon>Escherichia</taxon>
    </lineage>
</organism>
<reference key="1">
    <citation type="journal article" date="2002" name="Proc. Natl. Acad. Sci. U.S.A.">
        <title>Extensive mosaic structure revealed by the complete genome sequence of uropathogenic Escherichia coli.</title>
        <authorList>
            <person name="Welch R.A."/>
            <person name="Burland V."/>
            <person name="Plunkett G. III"/>
            <person name="Redford P."/>
            <person name="Roesch P."/>
            <person name="Rasko D."/>
            <person name="Buckles E.L."/>
            <person name="Liou S.-R."/>
            <person name="Boutin A."/>
            <person name="Hackett J."/>
            <person name="Stroud D."/>
            <person name="Mayhew G.F."/>
            <person name="Rose D.J."/>
            <person name="Zhou S."/>
            <person name="Schwartz D.C."/>
            <person name="Perna N.T."/>
            <person name="Mobley H.L.T."/>
            <person name="Donnenberg M.S."/>
            <person name="Blattner F.R."/>
        </authorList>
    </citation>
    <scope>NUCLEOTIDE SEQUENCE [LARGE SCALE GENOMIC DNA]</scope>
    <source>
        <strain>CFT073 / ATCC 700928 / UPEC</strain>
    </source>
</reference>
<evidence type="ECO:0000256" key="1">
    <source>
        <dbReference type="SAM" id="MobiDB-lite"/>
    </source>
</evidence>
<evidence type="ECO:0000305" key="2"/>
<proteinExistence type="inferred from homology"/>
<feature type="chain" id="PRO_0000311786" description="Uncharacterized protein YciY">
    <location>
        <begin position="1"/>
        <end position="57"/>
    </location>
</feature>
<feature type="region of interest" description="Disordered" evidence="1">
    <location>
        <begin position="1"/>
        <end position="25"/>
    </location>
</feature>
<feature type="compositionally biased region" description="Basic and acidic residues" evidence="1">
    <location>
        <begin position="1"/>
        <end position="10"/>
    </location>
</feature>
<name>YCIY_ECOL6</name>
<comment type="similarity">
    <text evidence="2">Belongs to the YciY family.</text>
</comment>
<comment type="sequence caution" evidence="2">
    <conflict type="erroneous initiation">
        <sequence resource="EMBL-CDS" id="AAN80181"/>
    </conflict>
</comment>
<sequence length="57" mass="7102">MKRSRTEVGRWRMQRQASRRKSRWLEGQSRRNMRIHSIRKCILNKQRNSLLFAIYNI</sequence>